<evidence type="ECO:0000250" key="1"/>
<evidence type="ECO:0000269" key="2">
    <source>
    </source>
</evidence>
<evidence type="ECO:0000269" key="3">
    <source>
    </source>
</evidence>
<evidence type="ECO:0000269" key="4">
    <source>
    </source>
</evidence>
<evidence type="ECO:0000269" key="5">
    <source>
    </source>
</evidence>
<evidence type="ECO:0000305" key="6"/>
<evidence type="ECO:0007829" key="7">
    <source>
        <dbReference type="PDB" id="1E7W"/>
    </source>
</evidence>
<evidence type="ECO:0007829" key="8">
    <source>
        <dbReference type="PDB" id="1W0C"/>
    </source>
</evidence>
<evidence type="ECO:0007829" key="9">
    <source>
        <dbReference type="PDB" id="7PXX"/>
    </source>
</evidence>
<accession>Q01782</accession>
<accession>Q4QBE7</accession>
<accession>Q9U1F8</accession>
<feature type="chain" id="PRO_0000054753" description="Pteridine reductase 1">
    <location>
        <begin position="1"/>
        <end position="288"/>
    </location>
</feature>
<feature type="active site" description="Proton acceptor">
    <location>
        <position position="194"/>
    </location>
</feature>
<feature type="binding site" evidence="1">
    <location>
        <begin position="17"/>
        <end position="40"/>
    </location>
    <ligand>
        <name>NADP(+)</name>
        <dbReference type="ChEBI" id="CHEBI:58349"/>
    </ligand>
</feature>
<feature type="binding site" evidence="2">
    <location>
        <position position="175"/>
    </location>
    <ligand>
        <name>substrate</name>
    </ligand>
</feature>
<feature type="sequence conflict" description="In Ref. 3; CAJ03998." evidence="6" ref="3">
    <original>F</original>
    <variation>V</variation>
    <location>
        <position position="162"/>
    </location>
</feature>
<feature type="strand" evidence="7">
    <location>
        <begin position="8"/>
        <end position="11"/>
    </location>
</feature>
<feature type="turn" evidence="9">
    <location>
        <begin position="12"/>
        <end position="15"/>
    </location>
</feature>
<feature type="helix" evidence="7">
    <location>
        <begin position="17"/>
        <end position="28"/>
    </location>
</feature>
<feature type="strand" evidence="7">
    <location>
        <begin position="32"/>
        <end position="39"/>
    </location>
</feature>
<feature type="helix" evidence="7">
    <location>
        <begin position="41"/>
        <end position="54"/>
    </location>
</feature>
<feature type="strand" evidence="7">
    <location>
        <begin position="59"/>
        <end position="63"/>
    </location>
</feature>
<feature type="strand" evidence="7">
    <location>
        <begin position="67"/>
        <end position="69"/>
    </location>
</feature>
<feature type="strand" evidence="8">
    <location>
        <begin position="75"/>
        <end position="77"/>
    </location>
</feature>
<feature type="helix" evidence="7">
    <location>
        <begin position="85"/>
        <end position="100"/>
    </location>
</feature>
<feature type="strand" evidence="7">
    <location>
        <begin position="105"/>
        <end position="108"/>
    </location>
</feature>
<feature type="helix" evidence="7">
    <location>
        <begin position="134"/>
        <end position="147"/>
    </location>
</feature>
<feature type="helix" evidence="7">
    <location>
        <begin position="149"/>
        <end position="163"/>
    </location>
</feature>
<feature type="helix" evidence="7">
    <location>
        <begin position="167"/>
        <end position="169"/>
    </location>
</feature>
<feature type="strand" evidence="7">
    <location>
        <begin position="174"/>
        <end position="179"/>
    </location>
</feature>
<feature type="turn" evidence="7">
    <location>
        <begin position="182"/>
        <end position="185"/>
    </location>
</feature>
<feature type="helix" evidence="7">
    <location>
        <begin position="192"/>
        <end position="212"/>
    </location>
</feature>
<feature type="helix" evidence="7">
    <location>
        <begin position="213"/>
        <end position="215"/>
    </location>
</feature>
<feature type="strand" evidence="7">
    <location>
        <begin position="217"/>
        <end position="227"/>
    </location>
</feature>
<feature type="helix" evidence="7">
    <location>
        <begin position="230"/>
        <end position="232"/>
    </location>
</feature>
<feature type="helix" evidence="7">
    <location>
        <begin position="235"/>
        <end position="242"/>
    </location>
</feature>
<feature type="turn" evidence="7">
    <location>
        <begin position="246"/>
        <end position="249"/>
    </location>
</feature>
<feature type="helix" evidence="7">
    <location>
        <begin position="254"/>
        <end position="265"/>
    </location>
</feature>
<feature type="helix" evidence="7">
    <location>
        <begin position="267"/>
        <end position="269"/>
    </location>
</feature>
<feature type="strand" evidence="7">
    <location>
        <begin position="276"/>
        <end position="280"/>
    </location>
</feature>
<feature type="helix" evidence="7">
    <location>
        <begin position="283"/>
        <end position="285"/>
    </location>
</feature>
<name>PTR1_LEIMA</name>
<reference key="1">
    <citation type="journal article" date="1992" name="J. Biol. Chem.">
        <title>A member of the aldoketo reductase family confers methotrexate resistance in Leishmania.</title>
        <authorList>
            <person name="Callahan H.L."/>
            <person name="Beverley S.M."/>
        </authorList>
    </citation>
    <scope>NUCLEOTIDE SEQUENCE [GENOMIC DNA]</scope>
    <source>
        <strain>MHOM/IR/83/Lt252 / CC-1</strain>
    </source>
</reference>
<reference key="2">
    <citation type="submission" date="2001-05" db="EMBL/GenBank/DDBJ databases">
        <authorList>
            <person name="Callahan H.L."/>
            <person name="Beverley S.M."/>
        </authorList>
    </citation>
    <scope>SEQUENCE REVISION TO 162-171</scope>
</reference>
<reference key="3">
    <citation type="journal article" date="2005" name="Science">
        <title>The genome of the kinetoplastid parasite, Leishmania major.</title>
        <authorList>
            <person name="Ivens A.C."/>
            <person name="Peacock C.S."/>
            <person name="Worthey E.A."/>
            <person name="Murphy L."/>
            <person name="Aggarwal G."/>
            <person name="Berriman M."/>
            <person name="Sisk E."/>
            <person name="Rajandream M.A."/>
            <person name="Adlem E."/>
            <person name="Aert R."/>
            <person name="Anupama A."/>
            <person name="Apostolou Z."/>
            <person name="Attipoe P."/>
            <person name="Bason N."/>
            <person name="Bauser C."/>
            <person name="Beck A."/>
            <person name="Beverley S.M."/>
            <person name="Bianchettin G."/>
            <person name="Borzym K."/>
            <person name="Bothe G."/>
            <person name="Bruschi C.V."/>
            <person name="Collins M."/>
            <person name="Cadag E."/>
            <person name="Ciarloni L."/>
            <person name="Clayton C."/>
            <person name="Coulson R.M.R."/>
            <person name="Cronin A."/>
            <person name="Cruz A.K."/>
            <person name="Davies R.M."/>
            <person name="De Gaudenzi J."/>
            <person name="Dobson D.E."/>
            <person name="Duesterhoeft A."/>
            <person name="Fazelina G."/>
            <person name="Fosker N."/>
            <person name="Frasch A.C."/>
            <person name="Fraser A."/>
            <person name="Fuchs M."/>
            <person name="Gabel C."/>
            <person name="Goble A."/>
            <person name="Goffeau A."/>
            <person name="Harris D."/>
            <person name="Hertz-Fowler C."/>
            <person name="Hilbert H."/>
            <person name="Horn D."/>
            <person name="Huang Y."/>
            <person name="Klages S."/>
            <person name="Knights A."/>
            <person name="Kube M."/>
            <person name="Larke N."/>
            <person name="Litvin L."/>
            <person name="Lord A."/>
            <person name="Louie T."/>
            <person name="Marra M."/>
            <person name="Masuy D."/>
            <person name="Matthews K."/>
            <person name="Michaeli S."/>
            <person name="Mottram J.C."/>
            <person name="Mueller-Auer S."/>
            <person name="Munden H."/>
            <person name="Nelson S."/>
            <person name="Norbertczak H."/>
            <person name="Oliver K."/>
            <person name="O'neil S."/>
            <person name="Pentony M."/>
            <person name="Pohl T.M."/>
            <person name="Price C."/>
            <person name="Purnelle B."/>
            <person name="Quail M.A."/>
            <person name="Rabbinowitsch E."/>
            <person name="Reinhardt R."/>
            <person name="Rieger M."/>
            <person name="Rinta J."/>
            <person name="Robben J."/>
            <person name="Robertson L."/>
            <person name="Ruiz J.C."/>
            <person name="Rutter S."/>
            <person name="Saunders D."/>
            <person name="Schaefer M."/>
            <person name="Schein J."/>
            <person name="Schwartz D.C."/>
            <person name="Seeger K."/>
            <person name="Seyler A."/>
            <person name="Sharp S."/>
            <person name="Shin H."/>
            <person name="Sivam D."/>
            <person name="Squares R."/>
            <person name="Squares S."/>
            <person name="Tosato V."/>
            <person name="Vogt C."/>
            <person name="Volckaert G."/>
            <person name="Wambutt R."/>
            <person name="Warren T."/>
            <person name="Wedler H."/>
            <person name="Woodward J."/>
            <person name="Zhou S."/>
            <person name="Zimmermann W."/>
            <person name="Smith D.F."/>
            <person name="Blackwell J.M."/>
            <person name="Stuart K.D."/>
            <person name="Barrell B.G."/>
            <person name="Myler P.J."/>
        </authorList>
    </citation>
    <scope>NUCLEOTIDE SEQUENCE [LARGE SCALE GENOMIC DNA]</scope>
    <source>
        <strain>MHOM/IL/81/Friedlin</strain>
    </source>
</reference>
<reference key="4">
    <citation type="journal article" date="1994" name="Proc. Natl. Acad. Sci. U.S.A.">
        <title>PTR1: a reductase mediating salvage of oxidized pteridines and methotrexate resistance in the protozoan parasite Leishmania major.</title>
        <authorList>
            <person name="Bello A.R."/>
            <person name="Nare B."/>
            <person name="Freedman D."/>
            <person name="Hardy L.W."/>
            <person name="Beverley S.M."/>
        </authorList>
    </citation>
    <scope>FUNCTION</scope>
</reference>
<reference key="5">
    <citation type="journal article" date="1997" name="J. Biol. Chem.">
        <title>The roles of pteridine reductase 1 and dihydrofolate reductase-thymidylate synthase in pteridine metabolism in the protozoan parasite Leishmania major.</title>
        <authorList>
            <person name="Nare B."/>
            <person name="Hardy L.W."/>
            <person name="Beverley S.M."/>
        </authorList>
    </citation>
    <scope>SUBUNIT</scope>
    <source>
        <strain>MHOM/IR/83/Lt252</strain>
    </source>
</reference>
<reference key="6">
    <citation type="journal article" date="2001" name="Nat. Struct. Biol.">
        <title>Pteridine reductase mechanism correlates pterin metabolism with drug resistance in trypanosomatid parasites.</title>
        <authorList>
            <person name="Gourley D.G."/>
            <person name="Schuettelkopf A.W."/>
            <person name="Leonard G.A."/>
            <person name="Luba J."/>
            <person name="Hardy L.W."/>
            <person name="Beverley S.M."/>
            <person name="Hunter W.N."/>
        </authorList>
    </citation>
    <scope>X-RAY CRYSTALLOGRAPHY (2.2 ANGSTROMS) IN COMPLEX WITH NADP AND SUBSTRATE</scope>
</reference>
<reference key="7">
    <citation type="journal article" date="1998" name="Biochemistry">
        <title>Leishmania major pteridine reductase 1 belongs to the short chain dehydrogenase family: stereochemical and kinetic evidence.</title>
        <authorList>
            <person name="Luba J."/>
            <person name="Nare B."/>
            <person name="Liang P.-H."/>
            <person name="Anderson K.S."/>
            <person name="Beverley S.M."/>
            <person name="Hardy L.W."/>
        </authorList>
    </citation>
    <scope>PATHWAY</scope>
</reference>
<proteinExistence type="evidence at protein level"/>
<dbReference type="EC" id="1.5.1.33"/>
<dbReference type="EMBL" id="L01699">
    <property type="protein sequence ID" value="AAA29249.2"/>
    <property type="molecule type" value="Genomic_DNA"/>
</dbReference>
<dbReference type="EMBL" id="FR796419">
    <property type="protein sequence ID" value="CAJ03998.1"/>
    <property type="molecule type" value="Genomic_DNA"/>
</dbReference>
<dbReference type="PIR" id="A45168">
    <property type="entry name" value="A45168"/>
</dbReference>
<dbReference type="RefSeq" id="XP_001683351.1">
    <property type="nucleotide sequence ID" value="XM_001683299.1"/>
</dbReference>
<dbReference type="PDB" id="1E7W">
    <property type="method" value="X-ray"/>
    <property type="resolution" value="1.75 A"/>
    <property type="chains" value="A/B=1-288"/>
</dbReference>
<dbReference type="PDB" id="1E92">
    <property type="method" value="X-ray"/>
    <property type="resolution" value="2.20 A"/>
    <property type="chains" value="A/B/C/D=1-288"/>
</dbReference>
<dbReference type="PDB" id="1W0C">
    <property type="method" value="X-ray"/>
    <property type="resolution" value="2.60 A"/>
    <property type="chains" value="A/B/C/D/E/F/G/H=1-288"/>
</dbReference>
<dbReference type="PDB" id="2BF7">
    <property type="method" value="X-ray"/>
    <property type="resolution" value="2.40 A"/>
    <property type="chains" value="A/B/C/D=1-288"/>
</dbReference>
<dbReference type="PDB" id="2BFA">
    <property type="method" value="X-ray"/>
    <property type="resolution" value="2.70 A"/>
    <property type="chains" value="A/B/C/D=1-288"/>
</dbReference>
<dbReference type="PDB" id="2BFM">
    <property type="method" value="X-ray"/>
    <property type="resolution" value="2.60 A"/>
    <property type="chains" value="A/B/C/D=1-288"/>
</dbReference>
<dbReference type="PDB" id="2BFO">
    <property type="method" value="X-ray"/>
    <property type="resolution" value="2.60 A"/>
    <property type="chains" value="A/B/C/D=1-288"/>
</dbReference>
<dbReference type="PDB" id="2BFP">
    <property type="method" value="X-ray"/>
    <property type="resolution" value="2.55 A"/>
    <property type="chains" value="A/B/C/D=1-288"/>
</dbReference>
<dbReference type="PDB" id="2QHX">
    <property type="method" value="X-ray"/>
    <property type="resolution" value="2.61 A"/>
    <property type="chains" value="A/B/C/D=1-288"/>
</dbReference>
<dbReference type="PDB" id="3H4V">
    <property type="method" value="X-ray"/>
    <property type="resolution" value="2.40 A"/>
    <property type="chains" value="A/B/C/D/E/F/G/H=1-288"/>
</dbReference>
<dbReference type="PDB" id="5L42">
    <property type="method" value="X-ray"/>
    <property type="resolution" value="2.10 A"/>
    <property type="chains" value="A/B/C/D=1-288"/>
</dbReference>
<dbReference type="PDB" id="5L4N">
    <property type="method" value="X-ray"/>
    <property type="resolution" value="2.35 A"/>
    <property type="chains" value="A/B/C/D=1-288"/>
</dbReference>
<dbReference type="PDB" id="6RXC">
    <property type="method" value="X-ray"/>
    <property type="resolution" value="2.10 A"/>
    <property type="chains" value="A/B/C/D=1-288"/>
</dbReference>
<dbReference type="PDB" id="7PXX">
    <property type="method" value="X-ray"/>
    <property type="resolution" value="1.81 A"/>
    <property type="chains" value="A/B/C/D=1-288"/>
</dbReference>
<dbReference type="PDBsum" id="1E7W"/>
<dbReference type="PDBsum" id="1E92"/>
<dbReference type="PDBsum" id="1W0C"/>
<dbReference type="PDBsum" id="2BF7"/>
<dbReference type="PDBsum" id="2BFA"/>
<dbReference type="PDBsum" id="2BFM"/>
<dbReference type="PDBsum" id="2BFO"/>
<dbReference type="PDBsum" id="2BFP"/>
<dbReference type="PDBsum" id="2QHX"/>
<dbReference type="PDBsum" id="3H4V"/>
<dbReference type="PDBsum" id="5L42"/>
<dbReference type="PDBsum" id="5L4N"/>
<dbReference type="PDBsum" id="6RXC"/>
<dbReference type="PDBsum" id="7PXX"/>
<dbReference type="SMR" id="Q01782"/>
<dbReference type="STRING" id="5664.Q01782"/>
<dbReference type="BindingDB" id="Q01782"/>
<dbReference type="ChEMBL" id="CHEMBL6194"/>
<dbReference type="DrugBank" id="DB02532">
    <property type="generic name" value="2,4,6-Triaminoquinazoline"/>
</dbReference>
<dbReference type="DrugBank" id="DB04400">
    <property type="generic name" value="L-erythro-7,8-dihydrobiopterin"/>
</dbReference>
<dbReference type="DrugBank" id="DB02338">
    <property type="generic name" value="NADPH"/>
</dbReference>
<dbReference type="DrugBank" id="DB03461">
    <property type="generic name" value="Nicotinamide adenine dinucleotide phosphate"/>
</dbReference>
<dbReference type="DrugCentral" id="Q01782"/>
<dbReference type="EnsemblProtists" id="CAJ03998">
    <property type="protein sequence ID" value="CAJ03998"/>
    <property type="gene ID" value="LMJF_23_0270"/>
</dbReference>
<dbReference type="GeneID" id="5651987"/>
<dbReference type="KEGG" id="lma:LMJF_23_0270"/>
<dbReference type="VEuPathDB" id="TriTrypDB:LmjF.23.0270"/>
<dbReference type="VEuPathDB" id="TriTrypDB:LMJFC_230008700"/>
<dbReference type="VEuPathDB" id="TriTrypDB:LMJLV39_230008000"/>
<dbReference type="VEuPathDB" id="TriTrypDB:LMJSD75_230008200"/>
<dbReference type="eggNOG" id="KOG0725">
    <property type="taxonomic scope" value="Eukaryota"/>
</dbReference>
<dbReference type="InParanoid" id="Q01782"/>
<dbReference type="BioCyc" id="MetaCyc:MONOMER-124427"/>
<dbReference type="BRENDA" id="1.5.1.33">
    <property type="organism ID" value="2950"/>
</dbReference>
<dbReference type="SABIO-RK" id="Q01782"/>
<dbReference type="UniPathway" id="UPA00849">
    <property type="reaction ID" value="UER00822"/>
</dbReference>
<dbReference type="EvolutionaryTrace" id="Q01782"/>
<dbReference type="PRO" id="PR:Q01782"/>
<dbReference type="Proteomes" id="UP000000542">
    <property type="component" value="Chromosome 23"/>
</dbReference>
<dbReference type="GO" id="GO:0005829">
    <property type="term" value="C:cytosol"/>
    <property type="evidence" value="ECO:0000266"/>
    <property type="project" value="GeneDB"/>
</dbReference>
<dbReference type="GO" id="GO:0004155">
    <property type="term" value="F:6,7-dihydropteridine reductase activity"/>
    <property type="evidence" value="ECO:0000314"/>
    <property type="project" value="GeneDB"/>
</dbReference>
<dbReference type="GO" id="GO:0016491">
    <property type="term" value="F:oxidoreductase activity"/>
    <property type="evidence" value="ECO:0000255"/>
    <property type="project" value="GeneDB"/>
</dbReference>
<dbReference type="GO" id="GO:0047040">
    <property type="term" value="F:pteridine reductase activity"/>
    <property type="evidence" value="ECO:0000314"/>
    <property type="project" value="GeneDB"/>
</dbReference>
<dbReference type="GO" id="GO:0031427">
    <property type="term" value="P:response to methotrexate"/>
    <property type="evidence" value="ECO:0007669"/>
    <property type="project" value="UniProtKB-KW"/>
</dbReference>
<dbReference type="GO" id="GO:0006729">
    <property type="term" value="P:tetrahydrobiopterin biosynthetic process"/>
    <property type="evidence" value="ECO:0007669"/>
    <property type="project" value="UniProtKB-UniPathway"/>
</dbReference>
<dbReference type="CDD" id="cd05357">
    <property type="entry name" value="PR_SDR_c"/>
    <property type="match status" value="1"/>
</dbReference>
<dbReference type="FunFam" id="3.40.50.720:FF:000869">
    <property type="entry name" value="Pteridine reductase"/>
    <property type="match status" value="1"/>
</dbReference>
<dbReference type="Gene3D" id="3.40.50.720">
    <property type="entry name" value="NAD(P)-binding Rossmann-like Domain"/>
    <property type="match status" value="1"/>
</dbReference>
<dbReference type="InterPro" id="IPR036291">
    <property type="entry name" value="NAD(P)-bd_dom_sf"/>
</dbReference>
<dbReference type="InterPro" id="IPR014058">
    <property type="entry name" value="Pteridine_reductase"/>
</dbReference>
<dbReference type="InterPro" id="IPR020904">
    <property type="entry name" value="Sc_DH/Rdtase_CS"/>
</dbReference>
<dbReference type="InterPro" id="IPR002347">
    <property type="entry name" value="SDR_fam"/>
</dbReference>
<dbReference type="NCBIfam" id="TIGR02685">
    <property type="entry name" value="pter_reduc_Leis"/>
    <property type="match status" value="1"/>
</dbReference>
<dbReference type="PANTHER" id="PTHR43639">
    <property type="entry name" value="OXIDOREDUCTASE, SHORT-CHAIN DEHYDROGENASE/REDUCTASE FAMILY (AFU_ORTHOLOGUE AFUA_5G02870)"/>
    <property type="match status" value="1"/>
</dbReference>
<dbReference type="PANTHER" id="PTHR43639:SF1">
    <property type="entry name" value="SHORT-CHAIN DEHYDROGENASE_REDUCTASE FAMILY PROTEIN"/>
    <property type="match status" value="1"/>
</dbReference>
<dbReference type="Pfam" id="PF13561">
    <property type="entry name" value="adh_short_C2"/>
    <property type="match status" value="1"/>
</dbReference>
<dbReference type="PRINTS" id="PR00081">
    <property type="entry name" value="GDHRDH"/>
</dbReference>
<dbReference type="PRINTS" id="PR00080">
    <property type="entry name" value="SDRFAMILY"/>
</dbReference>
<dbReference type="SUPFAM" id="SSF51735">
    <property type="entry name" value="NAD(P)-binding Rossmann-fold domains"/>
    <property type="match status" value="1"/>
</dbReference>
<dbReference type="PROSITE" id="PS00061">
    <property type="entry name" value="ADH_SHORT"/>
    <property type="match status" value="1"/>
</dbReference>
<sequence length="288" mass="30457">MTAPTVPVALVTGAAKRLGRSIAEGLHAEGYAVCLHYHRSAAEANALSATLNARRPNSAITVQADLSNVATAPVSGADGSAPVTLFTRCAELVAACYTHWGRCDVLVNNASSFYPTPLLRNDEDGHEPCVGDREAMETATADLFGSNAIAPYFLIKAFAHRFAGTPAKHRGTNYSIINMVDAMTNQPLLGYTIYTMAKGALEGLTRSAALELAPLQIRVNGVGPGLSVLVDDMPPAVWEGHRSKVPLYQRDSSAAEVSDVVIFLCSSKAKYITGTCVKVDGGYSLTRA</sequence>
<gene>
    <name type="primary">PTR1</name>
    <name type="synonym">HMTXR</name>
    <name type="ORF">L1063.01</name>
    <name type="ORF">LmjF23.0270</name>
    <name type="ORF">LmjF_23_0270</name>
</gene>
<keyword id="KW-0002">3D-structure</keyword>
<keyword id="KW-0487">Methotrexate resistance</keyword>
<keyword id="KW-0521">NADP</keyword>
<keyword id="KW-0560">Oxidoreductase</keyword>
<keyword id="KW-1185">Reference proteome</keyword>
<organism>
    <name type="scientific">Leishmania major</name>
    <dbReference type="NCBI Taxonomy" id="5664"/>
    <lineage>
        <taxon>Eukaryota</taxon>
        <taxon>Discoba</taxon>
        <taxon>Euglenozoa</taxon>
        <taxon>Kinetoplastea</taxon>
        <taxon>Metakinetoplastina</taxon>
        <taxon>Trypanosomatida</taxon>
        <taxon>Trypanosomatidae</taxon>
        <taxon>Leishmaniinae</taxon>
        <taxon>Leishmania</taxon>
    </lineage>
</organism>
<comment type="function">
    <text evidence="3">Exhibits a NADPH-dependent biopterin reductase activity. Has good activity with folate and significant activity with dihydrofolate and dihydrobiopterin, but not with quinonoid dihydrobiopterin. Confers resistance to methotrexate (MTX).</text>
</comment>
<comment type="catalytic activity">
    <reaction>
        <text>(6R)-L-erythro-5,6,7,8-tetrahydrobiopterin + 2 NADP(+) = L-erythro-biopterin + 2 NADPH + 2 H(+)</text>
        <dbReference type="Rhea" id="RHEA:19509"/>
        <dbReference type="ChEBI" id="CHEBI:15378"/>
        <dbReference type="ChEBI" id="CHEBI:57783"/>
        <dbReference type="ChEBI" id="CHEBI:58349"/>
        <dbReference type="ChEBI" id="CHEBI:59560"/>
        <dbReference type="ChEBI" id="CHEBI:63931"/>
        <dbReference type="EC" id="1.5.1.33"/>
    </reaction>
</comment>
<comment type="pathway">
    <text evidence="5">Cofactor biosynthesis; tetrahydrobiopterin biosynthesis; tetrahydrobiopterin from biopterin: step 1/1.</text>
</comment>
<comment type="subunit">
    <text evidence="2 4">Homotetramer.</text>
</comment>
<comment type="similarity">
    <text evidence="6">Belongs to the short-chain dehydrogenases/reductases (SDR) family.</text>
</comment>
<protein>
    <recommendedName>
        <fullName>Pteridine reductase 1</fullName>
        <ecNumber>1.5.1.33</ecNumber>
    </recommendedName>
    <alternativeName>
        <fullName>H region methotrexate resistance protein</fullName>
    </alternativeName>
</protein>